<keyword id="KW-0130">Cell adhesion</keyword>
<keyword id="KW-0903">Direct protein sequencing</keyword>
<keyword id="KW-1015">Disulfide bond</keyword>
<keyword id="KW-0325">Glycoprotein</keyword>
<keyword id="KW-0393">Immunoglobulin domain</keyword>
<keyword id="KW-0472">Membrane</keyword>
<keyword id="KW-1185">Reference proteome</keyword>
<keyword id="KW-0732">Signal</keyword>
<keyword id="KW-0812">Transmembrane</keyword>
<keyword id="KW-1133">Transmembrane helix</keyword>
<organism>
    <name type="scientific">Bos taurus</name>
    <name type="common">Bovine</name>
    <dbReference type="NCBI Taxonomy" id="9913"/>
    <lineage>
        <taxon>Eukaryota</taxon>
        <taxon>Metazoa</taxon>
        <taxon>Chordata</taxon>
        <taxon>Craniata</taxon>
        <taxon>Vertebrata</taxon>
        <taxon>Euteleostomi</taxon>
        <taxon>Mammalia</taxon>
        <taxon>Eutheria</taxon>
        <taxon>Laurasiatheria</taxon>
        <taxon>Artiodactyla</taxon>
        <taxon>Ruminantia</taxon>
        <taxon>Pecora</taxon>
        <taxon>Bovidae</taxon>
        <taxon>Bovinae</taxon>
        <taxon>Bos</taxon>
    </lineage>
</organism>
<dbReference type="EMBL" id="L21757">
    <property type="status" value="NOT_ANNOTATED_CDS"/>
    <property type="molecule type" value="mRNA"/>
</dbReference>
<dbReference type="EMBL" id="BC142443">
    <property type="protein sequence ID" value="AAI42444.1"/>
    <property type="molecule type" value="mRNA"/>
</dbReference>
<dbReference type="PIR" id="A47712">
    <property type="entry name" value="A47712"/>
</dbReference>
<dbReference type="SMR" id="P55803"/>
<dbReference type="FunCoup" id="P55803">
    <property type="interactions" value="199"/>
</dbReference>
<dbReference type="STRING" id="9913.ENSBTAP00000058437"/>
<dbReference type="GlyCosmos" id="P55803">
    <property type="glycosylation" value="1 site, No reported glycans"/>
</dbReference>
<dbReference type="GlyGen" id="P55803">
    <property type="glycosylation" value="1 site"/>
</dbReference>
<dbReference type="PaxDb" id="9913-ENSBTAP00000042496"/>
<dbReference type="Ensembl" id="ENSBTAT00000045079.5">
    <property type="protein sequence ID" value="ENSBTAP00000042496.3"/>
    <property type="gene ID" value="ENSBTAG00000017818.7"/>
</dbReference>
<dbReference type="VEuPathDB" id="HostDB:ENSBTAG00000017818"/>
<dbReference type="VGNC" id="VGNC:57316">
    <property type="gene designation" value="MOG"/>
</dbReference>
<dbReference type="eggNOG" id="ENOG502SQC1">
    <property type="taxonomic scope" value="Eukaryota"/>
</dbReference>
<dbReference type="GeneTree" id="ENSGT00940000153527"/>
<dbReference type="InParanoid" id="P55803"/>
<dbReference type="OMA" id="PCWKVAL"/>
<dbReference type="OrthoDB" id="9049620at2759"/>
<dbReference type="TreeFam" id="TF331083"/>
<dbReference type="Proteomes" id="UP000009136">
    <property type="component" value="Chromosome 23"/>
</dbReference>
<dbReference type="Bgee" id="ENSBTAG00000017818">
    <property type="expression patterns" value="Expressed in hypothalamus and 105 other cell types or tissues"/>
</dbReference>
<dbReference type="GO" id="GO:0009897">
    <property type="term" value="C:external side of plasma membrane"/>
    <property type="evidence" value="ECO:0000318"/>
    <property type="project" value="GO_Central"/>
</dbReference>
<dbReference type="GO" id="GO:0005102">
    <property type="term" value="F:signaling receptor binding"/>
    <property type="evidence" value="ECO:0000318"/>
    <property type="project" value="GO_Central"/>
</dbReference>
<dbReference type="GO" id="GO:0007155">
    <property type="term" value="P:cell adhesion"/>
    <property type="evidence" value="ECO:0007669"/>
    <property type="project" value="UniProtKB-KW"/>
</dbReference>
<dbReference type="GO" id="GO:0001817">
    <property type="term" value="P:regulation of cytokine production"/>
    <property type="evidence" value="ECO:0000318"/>
    <property type="project" value="GO_Central"/>
</dbReference>
<dbReference type="GO" id="GO:0050852">
    <property type="term" value="P:T cell receptor signaling pathway"/>
    <property type="evidence" value="ECO:0000318"/>
    <property type="project" value="GO_Central"/>
</dbReference>
<dbReference type="CDD" id="cd05713">
    <property type="entry name" value="IgV_MOG_like"/>
    <property type="match status" value="1"/>
</dbReference>
<dbReference type="FunFam" id="2.60.40.10:FF:000183">
    <property type="entry name" value="Myelin-oligodendrocyte glycoprotein"/>
    <property type="match status" value="1"/>
</dbReference>
<dbReference type="Gene3D" id="2.60.40.10">
    <property type="entry name" value="Immunoglobulins"/>
    <property type="match status" value="1"/>
</dbReference>
<dbReference type="InterPro" id="IPR007110">
    <property type="entry name" value="Ig-like_dom"/>
</dbReference>
<dbReference type="InterPro" id="IPR036179">
    <property type="entry name" value="Ig-like_dom_sf"/>
</dbReference>
<dbReference type="InterPro" id="IPR013783">
    <property type="entry name" value="Ig-like_fold"/>
</dbReference>
<dbReference type="InterPro" id="IPR003599">
    <property type="entry name" value="Ig_sub"/>
</dbReference>
<dbReference type="InterPro" id="IPR013106">
    <property type="entry name" value="Ig_V-set"/>
</dbReference>
<dbReference type="InterPro" id="IPR050504">
    <property type="entry name" value="IgSF_BTN/MOG"/>
</dbReference>
<dbReference type="InterPro" id="IPR016663">
    <property type="entry name" value="Myelin-oligodendrocyte_glycop"/>
</dbReference>
<dbReference type="PANTHER" id="PTHR24100">
    <property type="entry name" value="BUTYROPHILIN"/>
    <property type="match status" value="1"/>
</dbReference>
<dbReference type="PANTHER" id="PTHR24100:SF71">
    <property type="entry name" value="MYELIN-OLIGODENDROCYTE GLYCOPROTEIN"/>
    <property type="match status" value="1"/>
</dbReference>
<dbReference type="Pfam" id="PF07686">
    <property type="entry name" value="V-set"/>
    <property type="match status" value="1"/>
</dbReference>
<dbReference type="PIRSF" id="PIRSF016522">
    <property type="entry name" value="MOG"/>
    <property type="match status" value="1"/>
</dbReference>
<dbReference type="SMART" id="SM00409">
    <property type="entry name" value="IG"/>
    <property type="match status" value="1"/>
</dbReference>
<dbReference type="SMART" id="SM00406">
    <property type="entry name" value="IGv"/>
    <property type="match status" value="1"/>
</dbReference>
<dbReference type="SUPFAM" id="SSF48726">
    <property type="entry name" value="Immunoglobulin"/>
    <property type="match status" value="1"/>
</dbReference>
<dbReference type="PROSITE" id="PS50835">
    <property type="entry name" value="IG_LIKE"/>
    <property type="match status" value="1"/>
</dbReference>
<evidence type="ECO:0000250" key="1"/>
<evidence type="ECO:0000255" key="2"/>
<evidence type="ECO:0000255" key="3">
    <source>
        <dbReference type="PROSITE-ProRule" id="PRU00114"/>
    </source>
</evidence>
<evidence type="ECO:0000269" key="4">
    <source>
    </source>
</evidence>
<evidence type="ECO:0000305" key="5"/>
<proteinExistence type="evidence at protein level"/>
<gene>
    <name type="primary">MOG</name>
</gene>
<sequence>MASLLSSSLPSCLPSLLFLLLQLTSSSAGQFRVIGPGHPIRALVGDEVELPCRISPGKNATGMEVGWYRPPFSRVVHLYRNGKDQDEEQAPEYRGRTQLLKETIGEGKVTLRIRNVRFSDEGGFTCFFRDHSYQEEAAMELKVEDPFYWINPGVLVLIAVLPVLLLQITVGLVFLCLQRRLRGKLWAEIENLHRTFDPHFLMVPCWKITLFVIVPVLGPLVALIICYNWLHRRLAGQFLEELRNPF</sequence>
<name>MOG_BOVIN</name>
<feature type="signal peptide" evidence="4">
    <location>
        <begin position="1"/>
        <end position="28"/>
    </location>
</feature>
<feature type="chain" id="PRO_0000014887" description="Myelin-oligodendrocyte glycoprotein">
    <location>
        <begin position="29"/>
        <end position="246"/>
    </location>
</feature>
<feature type="topological domain" description="Extracellular" evidence="2">
    <location>
        <begin position="29"/>
        <end position="153"/>
    </location>
</feature>
<feature type="transmembrane region" description="Helical" evidence="2">
    <location>
        <begin position="154"/>
        <end position="174"/>
    </location>
</feature>
<feature type="topological domain" description="Cytoplasmic" evidence="2">
    <location>
        <begin position="175"/>
        <end position="209"/>
    </location>
</feature>
<feature type="transmembrane region" description="Helical" evidence="2">
    <location>
        <begin position="210"/>
        <end position="230"/>
    </location>
</feature>
<feature type="topological domain" description="Extracellular" evidence="2">
    <location>
        <begin position="231"/>
        <end position="246"/>
    </location>
</feature>
<feature type="domain" description="Ig-like V-type">
    <location>
        <begin position="29"/>
        <end position="144"/>
    </location>
</feature>
<feature type="glycosylation site" description="N-linked (GlcNAc...) asparagine" evidence="2">
    <location>
        <position position="59"/>
    </location>
</feature>
<feature type="disulfide bond" evidence="3">
    <location>
        <begin position="52"/>
        <end position="126"/>
    </location>
</feature>
<protein>
    <recommendedName>
        <fullName>Myelin-oligodendrocyte glycoprotein</fullName>
    </recommendedName>
</protein>
<accession>P55803</accession>
<accession>A5PKD0</accession>
<reference key="1">
    <citation type="journal article" date="1993" name="Proc. Natl. Acad. Sci. U.S.A.">
        <title>Myelin/oligodendrocyte glycoprotein is a member of a subset of the immunoglobulin superfamily encoded within the major histocompatibility complex.</title>
        <authorList>
            <person name="Pham-Dinh D."/>
            <person name="Mattei M.-G."/>
            <person name="Nussbaum J.-L."/>
            <person name="Roussel G."/>
            <person name="Pontarotti P."/>
            <person name="Roeckel N."/>
            <person name="Mather I.H."/>
            <person name="Artzt K."/>
            <person name="Lindahl K.F."/>
            <person name="Dautigny A."/>
        </authorList>
    </citation>
    <scope>NUCLEOTIDE SEQUENCE [MRNA]</scope>
    <scope>PROTEIN SEQUENCE OF 63-70</scope>
    <source>
        <tissue>Brain</tissue>
    </source>
</reference>
<reference key="2">
    <citation type="submission" date="2007-06" db="EMBL/GenBank/DDBJ databases">
        <authorList>
            <consortium name="NIH - Mammalian Gene Collection (MGC) project"/>
        </authorList>
    </citation>
    <scope>NUCLEOTIDE SEQUENCE [LARGE SCALE MRNA]</scope>
    <source>
        <strain>Hereford</strain>
        <tissue>Hypothalamus</tissue>
    </source>
</reference>
<reference key="3">
    <citation type="journal article" date="1993" name="Neurochem. Res.">
        <title>Biochemical and immunohistochemical studies with specific polyclonal antibodies directed against bovine myelin/oligodendrocyte glycoprotein.</title>
        <authorList>
            <person name="Birling M.C."/>
            <person name="Roussel G."/>
            <person name="Nussbaum F."/>
            <person name="Nussbaum J.-L."/>
        </authorList>
    </citation>
    <scope>PROTEIN SEQUENCE OF 29-36</scope>
    <source>
        <tissue>Brain</tissue>
    </source>
</reference>
<comment type="function">
    <text evidence="1">Mediates homophilic cell-cell adhesion (By similarity). Minor component of the myelin sheath. May be involved in completion and/or maintenance of the myelin sheath and in cell-cell communication.</text>
</comment>
<comment type="subunit">
    <text evidence="1">Homodimer.</text>
</comment>
<comment type="subcellular location">
    <subcellularLocation>
        <location>Membrane</location>
        <topology>Multi-pass membrane protein</topology>
    </subcellularLocation>
</comment>
<comment type="tissue specificity">
    <text>Found exclusively in the CNS, where it is localized on the surface of myelin and oligodendrocyte cytoplasmic membranes.</text>
</comment>
<comment type="similarity">
    <text evidence="5">Belongs to the immunoglobulin superfamily. BTN/MOG family.</text>
</comment>
<comment type="caution">
    <text evidence="5">Do not confuse myelin-oligodendrocyte glycoprotein (MOG) with oligodendrocyte-myelin glycoprotein (OMG).</text>
</comment>